<protein>
    <recommendedName>
        <fullName>BOI-related E3 ubiquitin-protein ligase 1</fullName>
        <ecNumber evidence="4">2.3.2.27</ecNumber>
    </recommendedName>
    <alternativeName>
        <fullName evidence="6">RING-type E3 ubiquitin transferase BRG1</fullName>
    </alternativeName>
</protein>
<keyword id="KW-0025">Alternative splicing</keyword>
<keyword id="KW-0175">Coiled coil</keyword>
<keyword id="KW-0479">Metal-binding</keyword>
<keyword id="KW-0611">Plant defense</keyword>
<keyword id="KW-1185">Reference proteome</keyword>
<keyword id="KW-0808">Transferase</keyword>
<keyword id="KW-0833">Ubl conjugation pathway</keyword>
<keyword id="KW-0862">Zinc</keyword>
<keyword id="KW-0863">Zinc-finger</keyword>
<proteinExistence type="evidence at protein level"/>
<name>BRG1_ARATH</name>
<evidence type="ECO:0000250" key="1"/>
<evidence type="ECO:0000255" key="2"/>
<evidence type="ECO:0000255" key="3">
    <source>
        <dbReference type="PROSITE-ProRule" id="PRU00175"/>
    </source>
</evidence>
<evidence type="ECO:0000269" key="4">
    <source>
    </source>
</evidence>
<evidence type="ECO:0000269" key="5">
    <source>
    </source>
</evidence>
<evidence type="ECO:0000305" key="6"/>
<sequence length="294" mass="32549">MAVEARHMNLFSSQYITNRECVKSQTNMNNGQQIAGGGFPVTIGDRNLQYIDPINSFNKSESELTAISKRQRDSTFDSDALIASQKRRAIAFSPASLIDAELVSQIQQQNSEIDRFVAQQTETLRIELEARQRTQTRMLASAVQNAILKKLKAKDEEIIRMGKLNWVLQERVKNLYVENQIWRDLAQTNEATANNLRSNLEQVLAQVDDLDAFRRPLVEEADDAESSCGSCDGGDVTAVVNGGCKRCGELTASVLVLPCRHLCLCTVCGSSALLRTCPVCDMVMTASVHVNMSS</sequence>
<dbReference type="EC" id="2.3.2.27" evidence="4"/>
<dbReference type="EMBL" id="AB019224">
    <property type="protein sequence ID" value="BAB09495.1"/>
    <property type="molecule type" value="Genomic_DNA"/>
</dbReference>
<dbReference type="EMBL" id="CP002688">
    <property type="protein sequence ID" value="AED95201.1"/>
    <property type="molecule type" value="Genomic_DNA"/>
</dbReference>
<dbReference type="EMBL" id="CP002688">
    <property type="protein sequence ID" value="AED95202.1"/>
    <property type="molecule type" value="Genomic_DNA"/>
</dbReference>
<dbReference type="EMBL" id="AY058839">
    <property type="protein sequence ID" value="AAL24227.1"/>
    <property type="molecule type" value="mRNA"/>
</dbReference>
<dbReference type="EMBL" id="AY143844">
    <property type="protein sequence ID" value="AAN28783.1"/>
    <property type="molecule type" value="mRNA"/>
</dbReference>
<dbReference type="RefSeq" id="NP_199323.2">
    <molecule id="Q9FHE4-2"/>
    <property type="nucleotide sequence ID" value="NM_123878.3"/>
</dbReference>
<dbReference type="RefSeq" id="NP_851134.1">
    <molecule id="Q9FHE4-1"/>
    <property type="nucleotide sequence ID" value="NM_180803.2"/>
</dbReference>
<dbReference type="SMR" id="Q9FHE4"/>
<dbReference type="BioGRID" id="19792">
    <property type="interactions" value="1"/>
</dbReference>
<dbReference type="FunCoup" id="Q9FHE4">
    <property type="interactions" value="737"/>
</dbReference>
<dbReference type="STRING" id="3702.Q9FHE4"/>
<dbReference type="PaxDb" id="3702-AT5G45100.1"/>
<dbReference type="ProteomicsDB" id="240673">
    <molecule id="Q9FHE4-1"/>
</dbReference>
<dbReference type="EnsemblPlants" id="AT5G45100.1">
    <molecule id="Q9FHE4-1"/>
    <property type="protein sequence ID" value="AT5G45100.1"/>
    <property type="gene ID" value="AT5G45100"/>
</dbReference>
<dbReference type="EnsemblPlants" id="AT5G45100.2">
    <molecule id="Q9FHE4-2"/>
    <property type="protein sequence ID" value="AT5G45100.2"/>
    <property type="gene ID" value="AT5G45100"/>
</dbReference>
<dbReference type="GeneID" id="834543"/>
<dbReference type="Gramene" id="AT5G45100.1">
    <molecule id="Q9FHE4-1"/>
    <property type="protein sequence ID" value="AT5G45100.1"/>
    <property type="gene ID" value="AT5G45100"/>
</dbReference>
<dbReference type="Gramene" id="AT5G45100.2">
    <molecule id="Q9FHE4-2"/>
    <property type="protein sequence ID" value="AT5G45100.2"/>
    <property type="gene ID" value="AT5G45100"/>
</dbReference>
<dbReference type="KEGG" id="ath:AT5G45100"/>
<dbReference type="Araport" id="AT5G45100"/>
<dbReference type="TAIR" id="AT5G45100">
    <property type="gene designation" value="BRG1"/>
</dbReference>
<dbReference type="eggNOG" id="KOG1100">
    <property type="taxonomic scope" value="Eukaryota"/>
</dbReference>
<dbReference type="InParanoid" id="Q9FHE4"/>
<dbReference type="OMA" id="HQPYGDH"/>
<dbReference type="PhylomeDB" id="Q9FHE4"/>
<dbReference type="UniPathway" id="UPA00144"/>
<dbReference type="PRO" id="PR:Q9FHE4"/>
<dbReference type="Proteomes" id="UP000006548">
    <property type="component" value="Chromosome 5"/>
</dbReference>
<dbReference type="ExpressionAtlas" id="Q9FHE4">
    <property type="expression patterns" value="baseline and differential"/>
</dbReference>
<dbReference type="GO" id="GO:0004842">
    <property type="term" value="F:ubiquitin-protein transferase activity"/>
    <property type="evidence" value="ECO:0000314"/>
    <property type="project" value="TAIR"/>
</dbReference>
<dbReference type="GO" id="GO:0008270">
    <property type="term" value="F:zinc ion binding"/>
    <property type="evidence" value="ECO:0007669"/>
    <property type="project" value="UniProtKB-KW"/>
</dbReference>
<dbReference type="GO" id="GO:0006952">
    <property type="term" value="P:defense response"/>
    <property type="evidence" value="ECO:0007669"/>
    <property type="project" value="UniProtKB-KW"/>
</dbReference>
<dbReference type="GO" id="GO:0043161">
    <property type="term" value="P:proteasome-mediated ubiquitin-dependent protein catabolic process"/>
    <property type="evidence" value="ECO:0007669"/>
    <property type="project" value="UniProtKB-UniPathway"/>
</dbReference>
<dbReference type="GO" id="GO:0043067">
    <property type="term" value="P:regulation of programmed cell death"/>
    <property type="evidence" value="ECO:0000315"/>
    <property type="project" value="TAIR"/>
</dbReference>
<dbReference type="CDD" id="cd16649">
    <property type="entry name" value="mRING-HC-C3HC5_CGRF1-like"/>
    <property type="match status" value="1"/>
</dbReference>
<dbReference type="Gene3D" id="3.30.40.10">
    <property type="entry name" value="Zinc/RING finger domain, C3HC4 (zinc finger)"/>
    <property type="match status" value="1"/>
</dbReference>
<dbReference type="InterPro" id="IPR001841">
    <property type="entry name" value="Znf_RING"/>
</dbReference>
<dbReference type="InterPro" id="IPR013083">
    <property type="entry name" value="Znf_RING/FYVE/PHD"/>
</dbReference>
<dbReference type="PANTHER" id="PTHR42647:SF55">
    <property type="entry name" value="BOI-RELATED E3 UBIQUITIN-PROTEIN LIGASE 1"/>
    <property type="match status" value="1"/>
</dbReference>
<dbReference type="PANTHER" id="PTHR42647">
    <property type="entry name" value="SBP (S-RIBONUCLEASE BINDING PROTEIN) FAMILY PROTEIN"/>
    <property type="match status" value="1"/>
</dbReference>
<dbReference type="Pfam" id="PF13920">
    <property type="entry name" value="zf-C3HC4_3"/>
    <property type="match status" value="1"/>
</dbReference>
<dbReference type="PROSITE" id="PS50089">
    <property type="entry name" value="ZF_RING_2"/>
    <property type="match status" value="1"/>
</dbReference>
<accession>Q9FHE4</accession>
<accession>Q3E8H0</accession>
<comment type="function">
    <text evidence="4 5">E3 ubiquitin-protein ligase involved in regulation of abiotic stress responses. Not involved in ubiquitination of MYB108/BOS1. Has no effect on the stability of the DELLA proteins.</text>
</comment>
<comment type="catalytic activity">
    <reaction evidence="4">
        <text>S-ubiquitinyl-[E2 ubiquitin-conjugating enzyme]-L-cysteine + [acceptor protein]-L-lysine = [E2 ubiquitin-conjugating enzyme]-L-cysteine + N(6)-ubiquitinyl-[acceptor protein]-L-lysine.</text>
        <dbReference type="EC" id="2.3.2.27"/>
    </reaction>
</comment>
<comment type="pathway">
    <text>Protein degradation; proteasomal ubiquitin-dependent pathway.</text>
</comment>
<comment type="subunit">
    <text evidence="5">Interacts with the DELLA proteins GAI, RGA, RGL1, RGL2 and RGL3.</text>
</comment>
<comment type="alternative products">
    <event type="alternative splicing"/>
    <isoform>
        <id>Q9FHE4-1</id>
        <name>1</name>
        <sequence type="displayed"/>
    </isoform>
    <isoform>
        <id>Q9FHE4-2</id>
        <name>2</name>
        <sequence type="described" ref="VSP_053490"/>
    </isoform>
</comment>
<comment type="induction">
    <text evidence="4">Up-regulated by salt and salicylic acid. Down-regulated by gibberellic acid and methyl jasmonate. Not regulated by pathogen or 1-aminocyclopropane-1-carboxylic acid (ACC).</text>
</comment>
<comment type="domain">
    <text evidence="1">The RING-type zinc finger domain mediates binding to an E2 ubiquitin-conjugating enzyme.</text>
</comment>
<comment type="disruption phenotype">
    <text evidence="4 5">No visible phenotype. Decreased resistance to B.cinerea and increased cell death upon pathogen infection. Boi, brg1, brg2 and brg3 quadruple mutant shows a higher GA signaling resulting in a higher seed germination in the presence of paclobutrazol, precocious juvenile-to-adult phase transition and early flowering.</text>
</comment>
<gene>
    <name type="primary">BRG1</name>
    <name type="ordered locus">At5g45100</name>
    <name type="ORF">K17O22.9</name>
</gene>
<reference key="1">
    <citation type="journal article" date="2000" name="DNA Res.">
        <title>Structural analysis of Arabidopsis thaliana chromosome 5. X. Sequence features of the regions of 3,076,755 bp covered by sixty P1 and TAC clones.</title>
        <authorList>
            <person name="Sato S."/>
            <person name="Nakamura Y."/>
            <person name="Kaneko T."/>
            <person name="Katoh T."/>
            <person name="Asamizu E."/>
            <person name="Kotani H."/>
            <person name="Tabata S."/>
        </authorList>
    </citation>
    <scope>NUCLEOTIDE SEQUENCE [LARGE SCALE GENOMIC DNA]</scope>
    <source>
        <strain>cv. Columbia</strain>
    </source>
</reference>
<reference key="2">
    <citation type="journal article" date="2017" name="Plant J.">
        <title>Araport11: a complete reannotation of the Arabidopsis thaliana reference genome.</title>
        <authorList>
            <person name="Cheng C.Y."/>
            <person name="Krishnakumar V."/>
            <person name="Chan A.P."/>
            <person name="Thibaud-Nissen F."/>
            <person name="Schobel S."/>
            <person name="Town C.D."/>
        </authorList>
    </citation>
    <scope>GENOME REANNOTATION</scope>
    <source>
        <strain>cv. Columbia</strain>
    </source>
</reference>
<reference key="3">
    <citation type="journal article" date="2003" name="Science">
        <title>Empirical analysis of transcriptional activity in the Arabidopsis genome.</title>
        <authorList>
            <person name="Yamada K."/>
            <person name="Lim J."/>
            <person name="Dale J.M."/>
            <person name="Chen H."/>
            <person name="Shinn P."/>
            <person name="Palm C.J."/>
            <person name="Southwick A.M."/>
            <person name="Wu H.C."/>
            <person name="Kim C.J."/>
            <person name="Nguyen M."/>
            <person name="Pham P.K."/>
            <person name="Cheuk R.F."/>
            <person name="Karlin-Newmann G."/>
            <person name="Liu S.X."/>
            <person name="Lam B."/>
            <person name="Sakano H."/>
            <person name="Wu T."/>
            <person name="Yu G."/>
            <person name="Miranda M."/>
            <person name="Quach H.L."/>
            <person name="Tripp M."/>
            <person name="Chang C.H."/>
            <person name="Lee J.M."/>
            <person name="Toriumi M.J."/>
            <person name="Chan M.M."/>
            <person name="Tang C.C."/>
            <person name="Onodera C.S."/>
            <person name="Deng J.M."/>
            <person name="Akiyama K."/>
            <person name="Ansari Y."/>
            <person name="Arakawa T."/>
            <person name="Banh J."/>
            <person name="Banno F."/>
            <person name="Bowser L."/>
            <person name="Brooks S.Y."/>
            <person name="Carninci P."/>
            <person name="Chao Q."/>
            <person name="Choy N."/>
            <person name="Enju A."/>
            <person name="Goldsmith A.D."/>
            <person name="Gurjal M."/>
            <person name="Hansen N.F."/>
            <person name="Hayashizaki Y."/>
            <person name="Johnson-Hopson C."/>
            <person name="Hsuan V.W."/>
            <person name="Iida K."/>
            <person name="Karnes M."/>
            <person name="Khan S."/>
            <person name="Koesema E."/>
            <person name="Ishida J."/>
            <person name="Jiang P.X."/>
            <person name="Jones T."/>
            <person name="Kawai J."/>
            <person name="Kamiya A."/>
            <person name="Meyers C."/>
            <person name="Nakajima M."/>
            <person name="Narusaka M."/>
            <person name="Seki M."/>
            <person name="Sakurai T."/>
            <person name="Satou M."/>
            <person name="Tamse R."/>
            <person name="Vaysberg M."/>
            <person name="Wallender E.K."/>
            <person name="Wong C."/>
            <person name="Yamamura Y."/>
            <person name="Yuan S."/>
            <person name="Shinozaki K."/>
            <person name="Davis R.W."/>
            <person name="Theologis A."/>
            <person name="Ecker J.R."/>
        </authorList>
    </citation>
    <scope>NUCLEOTIDE SEQUENCE [LARGE SCALE MRNA] (ISOFORM 1)</scope>
    <source>
        <strain>cv. Columbia</strain>
    </source>
</reference>
<reference key="4">
    <citation type="journal article" date="2010" name="Plant Physiol.">
        <title>The Arabidopsis Botrytis Susceptible1 Interactor defines a subclass of RING E3 ligases that regulate pathogen and stress responses.</title>
        <authorList>
            <person name="Luo H."/>
            <person name="Laluk K."/>
            <person name="Lai Z."/>
            <person name="Veronese P."/>
            <person name="Song F."/>
            <person name="Mengiste T."/>
        </authorList>
    </citation>
    <scope>FUNCTION</scope>
    <scope>CATALYTIC ACTIVITY</scope>
    <scope>INDUCTION BY PATHOGEN; SALICYLIC ACID; GIBBERELLIC ACID; ACC; METHYL JASMONATE AND SALT</scope>
    <scope>DISRUPTION PHENOTYPE</scope>
</reference>
<reference key="5">
    <citation type="journal article" date="2013" name="Plant Cell">
        <title>DELLA proteins and their interacting RING Finger proteins repress gibberellin responses by binding to the promoters of a subset of gibberellin-responsive genes in Arabidopsis.</title>
        <authorList>
            <person name="Park J."/>
            <person name="Nguyen K.T."/>
            <person name="Park E."/>
            <person name="Jeon J.S."/>
            <person name="Choi G."/>
        </authorList>
    </citation>
    <scope>FUNCTION</scope>
    <scope>INTERACTION WITH GAI; RGA; RGL1; RGL2 AND RGL3</scope>
    <scope>DISRUPTION PHENOTYPE</scope>
</reference>
<organism>
    <name type="scientific">Arabidopsis thaliana</name>
    <name type="common">Mouse-ear cress</name>
    <dbReference type="NCBI Taxonomy" id="3702"/>
    <lineage>
        <taxon>Eukaryota</taxon>
        <taxon>Viridiplantae</taxon>
        <taxon>Streptophyta</taxon>
        <taxon>Embryophyta</taxon>
        <taxon>Tracheophyta</taxon>
        <taxon>Spermatophyta</taxon>
        <taxon>Magnoliopsida</taxon>
        <taxon>eudicotyledons</taxon>
        <taxon>Gunneridae</taxon>
        <taxon>Pentapetalae</taxon>
        <taxon>rosids</taxon>
        <taxon>malvids</taxon>
        <taxon>Brassicales</taxon>
        <taxon>Brassicaceae</taxon>
        <taxon>Camelineae</taxon>
        <taxon>Arabidopsis</taxon>
    </lineage>
</organism>
<feature type="chain" id="PRO_0000424717" description="BOI-related E3 ubiquitin-protein ligase 1">
    <location>
        <begin position="1"/>
        <end position="294"/>
    </location>
</feature>
<feature type="zinc finger region" description="RING-type" evidence="3">
    <location>
        <begin position="244"/>
        <end position="281"/>
    </location>
</feature>
<feature type="region of interest" description="WRD domain">
    <location>
        <begin position="168"/>
        <end position="204"/>
    </location>
</feature>
<feature type="coiled-coil region" evidence="2">
    <location>
        <begin position="183"/>
        <end position="212"/>
    </location>
</feature>
<feature type="splice variant" id="VSP_053490" description="In isoform 2." evidence="6">
    <location>
        <begin position="1"/>
        <end position="27"/>
    </location>
</feature>